<gene>
    <name evidence="1" type="primary">rimO</name>
    <name type="ordered locus">Maqu_2732</name>
</gene>
<comment type="function">
    <text evidence="1">Catalyzes the methylthiolation of an aspartic acid residue of ribosomal protein uS12.</text>
</comment>
<comment type="catalytic activity">
    <reaction evidence="1">
        <text>L-aspartate(89)-[ribosomal protein uS12]-hydrogen + (sulfur carrier)-SH + AH2 + 2 S-adenosyl-L-methionine = 3-methylsulfanyl-L-aspartate(89)-[ribosomal protein uS12]-hydrogen + (sulfur carrier)-H + 5'-deoxyadenosine + L-methionine + A + S-adenosyl-L-homocysteine + 2 H(+)</text>
        <dbReference type="Rhea" id="RHEA:37087"/>
        <dbReference type="Rhea" id="RHEA-COMP:10460"/>
        <dbReference type="Rhea" id="RHEA-COMP:10461"/>
        <dbReference type="Rhea" id="RHEA-COMP:14737"/>
        <dbReference type="Rhea" id="RHEA-COMP:14739"/>
        <dbReference type="ChEBI" id="CHEBI:13193"/>
        <dbReference type="ChEBI" id="CHEBI:15378"/>
        <dbReference type="ChEBI" id="CHEBI:17319"/>
        <dbReference type="ChEBI" id="CHEBI:17499"/>
        <dbReference type="ChEBI" id="CHEBI:29917"/>
        <dbReference type="ChEBI" id="CHEBI:29961"/>
        <dbReference type="ChEBI" id="CHEBI:57844"/>
        <dbReference type="ChEBI" id="CHEBI:57856"/>
        <dbReference type="ChEBI" id="CHEBI:59789"/>
        <dbReference type="ChEBI" id="CHEBI:64428"/>
        <dbReference type="ChEBI" id="CHEBI:73599"/>
        <dbReference type="EC" id="2.8.4.4"/>
    </reaction>
</comment>
<comment type="cofactor">
    <cofactor evidence="1">
        <name>[4Fe-4S] cluster</name>
        <dbReference type="ChEBI" id="CHEBI:49883"/>
    </cofactor>
    <text evidence="1">Binds 2 [4Fe-4S] clusters. One cluster is coordinated with 3 cysteines and an exchangeable S-adenosyl-L-methionine.</text>
</comment>
<comment type="subcellular location">
    <subcellularLocation>
        <location evidence="1">Cytoplasm</location>
    </subcellularLocation>
</comment>
<comment type="similarity">
    <text evidence="1">Belongs to the methylthiotransferase family. RimO subfamily.</text>
</comment>
<name>RIMO_MARN8</name>
<accession>A1U488</accession>
<dbReference type="EC" id="2.8.4.4" evidence="1"/>
<dbReference type="EMBL" id="CP000514">
    <property type="protein sequence ID" value="ABM19807.1"/>
    <property type="molecule type" value="Genomic_DNA"/>
</dbReference>
<dbReference type="SMR" id="A1U488"/>
<dbReference type="STRING" id="351348.Maqu_2732"/>
<dbReference type="KEGG" id="maq:Maqu_2732"/>
<dbReference type="eggNOG" id="COG0621">
    <property type="taxonomic scope" value="Bacteria"/>
</dbReference>
<dbReference type="HOGENOM" id="CLU_018697_0_0_6"/>
<dbReference type="OrthoDB" id="9805215at2"/>
<dbReference type="Proteomes" id="UP000000998">
    <property type="component" value="Chromosome"/>
</dbReference>
<dbReference type="GO" id="GO:0005829">
    <property type="term" value="C:cytosol"/>
    <property type="evidence" value="ECO:0007669"/>
    <property type="project" value="TreeGrafter"/>
</dbReference>
<dbReference type="GO" id="GO:0051539">
    <property type="term" value="F:4 iron, 4 sulfur cluster binding"/>
    <property type="evidence" value="ECO:0007669"/>
    <property type="project" value="UniProtKB-UniRule"/>
</dbReference>
<dbReference type="GO" id="GO:0035599">
    <property type="term" value="F:aspartic acid methylthiotransferase activity"/>
    <property type="evidence" value="ECO:0007669"/>
    <property type="project" value="TreeGrafter"/>
</dbReference>
<dbReference type="GO" id="GO:0046872">
    <property type="term" value="F:metal ion binding"/>
    <property type="evidence" value="ECO:0007669"/>
    <property type="project" value="UniProtKB-KW"/>
</dbReference>
<dbReference type="GO" id="GO:0103039">
    <property type="term" value="F:protein methylthiotransferase activity"/>
    <property type="evidence" value="ECO:0007669"/>
    <property type="project" value="UniProtKB-EC"/>
</dbReference>
<dbReference type="GO" id="GO:0006400">
    <property type="term" value="P:tRNA modification"/>
    <property type="evidence" value="ECO:0007669"/>
    <property type="project" value="InterPro"/>
</dbReference>
<dbReference type="CDD" id="cd01335">
    <property type="entry name" value="Radical_SAM"/>
    <property type="match status" value="1"/>
</dbReference>
<dbReference type="FunFam" id="2.40.50.140:FF:000060">
    <property type="entry name" value="Ribosomal protein S12 methylthiotransferase RimO"/>
    <property type="match status" value="1"/>
</dbReference>
<dbReference type="FunFam" id="3.40.50.12160:FF:000002">
    <property type="entry name" value="Ribosomal protein S12 methylthiotransferase RimO"/>
    <property type="match status" value="1"/>
</dbReference>
<dbReference type="FunFam" id="3.80.30.20:FF:000001">
    <property type="entry name" value="tRNA-2-methylthio-N(6)-dimethylallyladenosine synthase 2"/>
    <property type="match status" value="1"/>
</dbReference>
<dbReference type="Gene3D" id="3.40.50.12160">
    <property type="entry name" value="Methylthiotransferase, N-terminal domain"/>
    <property type="match status" value="1"/>
</dbReference>
<dbReference type="Gene3D" id="2.40.50.140">
    <property type="entry name" value="Nucleic acid-binding proteins"/>
    <property type="match status" value="1"/>
</dbReference>
<dbReference type="Gene3D" id="3.80.30.20">
    <property type="entry name" value="tm_1862 like domain"/>
    <property type="match status" value="1"/>
</dbReference>
<dbReference type="HAMAP" id="MF_01865">
    <property type="entry name" value="MTTase_RimO"/>
    <property type="match status" value="1"/>
</dbReference>
<dbReference type="InterPro" id="IPR006638">
    <property type="entry name" value="Elp3/MiaA/NifB-like_rSAM"/>
</dbReference>
<dbReference type="InterPro" id="IPR005839">
    <property type="entry name" value="Methylthiotransferase"/>
</dbReference>
<dbReference type="InterPro" id="IPR020612">
    <property type="entry name" value="Methylthiotransferase_CS"/>
</dbReference>
<dbReference type="InterPro" id="IPR013848">
    <property type="entry name" value="Methylthiotransferase_N"/>
</dbReference>
<dbReference type="InterPro" id="IPR038135">
    <property type="entry name" value="Methylthiotransferase_N_sf"/>
</dbReference>
<dbReference type="InterPro" id="IPR012340">
    <property type="entry name" value="NA-bd_OB-fold"/>
</dbReference>
<dbReference type="InterPro" id="IPR005840">
    <property type="entry name" value="Ribosomal_uS12_MeSTrfase_RimO"/>
</dbReference>
<dbReference type="InterPro" id="IPR007197">
    <property type="entry name" value="rSAM"/>
</dbReference>
<dbReference type="InterPro" id="IPR023404">
    <property type="entry name" value="rSAM_horseshoe"/>
</dbReference>
<dbReference type="InterPro" id="IPR002792">
    <property type="entry name" value="TRAM_dom"/>
</dbReference>
<dbReference type="NCBIfam" id="TIGR01125">
    <property type="entry name" value="30S ribosomal protein S12 methylthiotransferase RimO"/>
    <property type="match status" value="1"/>
</dbReference>
<dbReference type="NCBIfam" id="TIGR00089">
    <property type="entry name" value="MiaB/RimO family radical SAM methylthiotransferase"/>
    <property type="match status" value="1"/>
</dbReference>
<dbReference type="PANTHER" id="PTHR43837">
    <property type="entry name" value="RIBOSOMAL PROTEIN S12 METHYLTHIOTRANSFERASE RIMO"/>
    <property type="match status" value="1"/>
</dbReference>
<dbReference type="PANTHER" id="PTHR43837:SF1">
    <property type="entry name" value="RIBOSOMAL PROTEIN US12 METHYLTHIOTRANSFERASE RIMO"/>
    <property type="match status" value="1"/>
</dbReference>
<dbReference type="Pfam" id="PF04055">
    <property type="entry name" value="Radical_SAM"/>
    <property type="match status" value="1"/>
</dbReference>
<dbReference type="Pfam" id="PF18693">
    <property type="entry name" value="TRAM_2"/>
    <property type="match status" value="1"/>
</dbReference>
<dbReference type="Pfam" id="PF00919">
    <property type="entry name" value="UPF0004"/>
    <property type="match status" value="1"/>
</dbReference>
<dbReference type="SFLD" id="SFLDG01082">
    <property type="entry name" value="B12-binding_domain_containing"/>
    <property type="match status" value="1"/>
</dbReference>
<dbReference type="SFLD" id="SFLDG01061">
    <property type="entry name" value="methylthiotransferase"/>
    <property type="match status" value="1"/>
</dbReference>
<dbReference type="SFLD" id="SFLDF00274">
    <property type="entry name" value="ribosomal_protein_S12_methylth"/>
    <property type="match status" value="1"/>
</dbReference>
<dbReference type="SMART" id="SM00729">
    <property type="entry name" value="Elp3"/>
    <property type="match status" value="1"/>
</dbReference>
<dbReference type="SUPFAM" id="SSF102114">
    <property type="entry name" value="Radical SAM enzymes"/>
    <property type="match status" value="1"/>
</dbReference>
<dbReference type="PROSITE" id="PS51449">
    <property type="entry name" value="MTTASE_N"/>
    <property type="match status" value="1"/>
</dbReference>
<dbReference type="PROSITE" id="PS01278">
    <property type="entry name" value="MTTASE_RADICAL"/>
    <property type="match status" value="1"/>
</dbReference>
<dbReference type="PROSITE" id="PS51918">
    <property type="entry name" value="RADICAL_SAM"/>
    <property type="match status" value="1"/>
</dbReference>
<dbReference type="PROSITE" id="PS50926">
    <property type="entry name" value="TRAM"/>
    <property type="match status" value="1"/>
</dbReference>
<reference key="1">
    <citation type="journal article" date="2011" name="Appl. Environ. Microbiol.">
        <title>Genomic potential of Marinobacter aquaeolei, a biogeochemical 'opportunitroph'.</title>
        <authorList>
            <person name="Singer E."/>
            <person name="Webb E.A."/>
            <person name="Nelson W.C."/>
            <person name="Heidelberg J.F."/>
            <person name="Ivanova N."/>
            <person name="Pati A."/>
            <person name="Edwards K.J."/>
        </authorList>
    </citation>
    <scope>NUCLEOTIDE SEQUENCE [LARGE SCALE GENOMIC DNA]</scope>
    <source>
        <strain>ATCC 700491 / DSM 11845 / VT8</strain>
    </source>
</reference>
<keyword id="KW-0004">4Fe-4S</keyword>
<keyword id="KW-0963">Cytoplasm</keyword>
<keyword id="KW-0408">Iron</keyword>
<keyword id="KW-0411">Iron-sulfur</keyword>
<keyword id="KW-0479">Metal-binding</keyword>
<keyword id="KW-0949">S-adenosyl-L-methionine</keyword>
<keyword id="KW-0808">Transferase</keyword>
<feature type="chain" id="PRO_0000374887" description="Ribosomal protein uS12 methylthiotransferase RimO">
    <location>
        <begin position="1"/>
        <end position="455"/>
    </location>
</feature>
<feature type="domain" description="MTTase N-terminal" evidence="1">
    <location>
        <begin position="21"/>
        <end position="131"/>
    </location>
</feature>
<feature type="domain" description="Radical SAM core" evidence="2">
    <location>
        <begin position="150"/>
        <end position="387"/>
    </location>
</feature>
<feature type="domain" description="TRAM" evidence="1">
    <location>
        <begin position="390"/>
        <end position="455"/>
    </location>
</feature>
<feature type="binding site" evidence="1">
    <location>
        <position position="30"/>
    </location>
    <ligand>
        <name>[4Fe-4S] cluster</name>
        <dbReference type="ChEBI" id="CHEBI:49883"/>
        <label>1</label>
    </ligand>
</feature>
<feature type="binding site" evidence="1">
    <location>
        <position position="66"/>
    </location>
    <ligand>
        <name>[4Fe-4S] cluster</name>
        <dbReference type="ChEBI" id="CHEBI:49883"/>
        <label>1</label>
    </ligand>
</feature>
<feature type="binding site" evidence="1">
    <location>
        <position position="95"/>
    </location>
    <ligand>
        <name>[4Fe-4S] cluster</name>
        <dbReference type="ChEBI" id="CHEBI:49883"/>
        <label>1</label>
    </ligand>
</feature>
<feature type="binding site" evidence="1">
    <location>
        <position position="164"/>
    </location>
    <ligand>
        <name>[4Fe-4S] cluster</name>
        <dbReference type="ChEBI" id="CHEBI:49883"/>
        <label>2</label>
        <note>4Fe-4S-S-AdoMet</note>
    </ligand>
</feature>
<feature type="binding site" evidence="1">
    <location>
        <position position="168"/>
    </location>
    <ligand>
        <name>[4Fe-4S] cluster</name>
        <dbReference type="ChEBI" id="CHEBI:49883"/>
        <label>2</label>
        <note>4Fe-4S-S-AdoMet</note>
    </ligand>
</feature>
<feature type="binding site" evidence="1">
    <location>
        <position position="171"/>
    </location>
    <ligand>
        <name>[4Fe-4S] cluster</name>
        <dbReference type="ChEBI" id="CHEBI:49883"/>
        <label>2</label>
        <note>4Fe-4S-S-AdoMet</note>
    </ligand>
</feature>
<evidence type="ECO:0000255" key="1">
    <source>
        <dbReference type="HAMAP-Rule" id="MF_01865"/>
    </source>
</evidence>
<evidence type="ECO:0000255" key="2">
    <source>
        <dbReference type="PROSITE-ProRule" id="PRU01266"/>
    </source>
</evidence>
<organism>
    <name type="scientific">Marinobacter nauticus (strain ATCC 700491 / DSM 11845 / VT8)</name>
    <name type="common">Marinobacter aquaeolei</name>
    <dbReference type="NCBI Taxonomy" id="351348"/>
    <lineage>
        <taxon>Bacteria</taxon>
        <taxon>Pseudomonadati</taxon>
        <taxon>Pseudomonadota</taxon>
        <taxon>Gammaproteobacteria</taxon>
        <taxon>Pseudomonadales</taxon>
        <taxon>Marinobacteraceae</taxon>
        <taxon>Marinobacter</taxon>
    </lineage>
</organism>
<sequence length="455" mass="50544">MAPDILQAFMTEKTQNAPQSGKVGFISLGCPKALVDSERILTQLRLDGYDVVPTYDDADIVVVNTCGFIDAAKQESLDAIGEAISENGKVIVTGCMGVEADRIRETHPGVLAVSGPHAYEEVVGAVHQYVPPRKEHDPFLDLVPPQGVKLTPRHYAYLKISEGCNHRCTFCIIPSMRGDLVSRPIGDVMDEAKRLVDAGVKEILVISQDTSAYGVDIKYRTGFWQGRPVKTKMQALCEALGEMGVWVRLHYVYPYPHVDDIIPLMAEGKILPYLDIPFQHASPRVLKAMKRPAHDSKTLERIRKWREICPELTIRSTFIVGFPGETEEDFQYLLDWLDEAQLDRVGAFTYSAVEGAPANELEGAVPEEVKEKRLARFMAKQAEISAARLQAKIGRTIDVLIDEVDEEGAIGRSKADAPEIDGMVYLNDETELVPGQIVQAVVEHADEHDLWARLI</sequence>
<proteinExistence type="inferred from homology"/>
<protein>
    <recommendedName>
        <fullName evidence="1">Ribosomal protein uS12 methylthiotransferase RimO</fullName>
        <shortName evidence="1">uS12 MTTase</shortName>
        <shortName evidence="1">uS12 methylthiotransferase</shortName>
        <ecNumber evidence="1">2.8.4.4</ecNumber>
    </recommendedName>
    <alternativeName>
        <fullName evidence="1">Ribosomal protein uS12 (aspartate-C(3))-methylthiotransferase</fullName>
    </alternativeName>
    <alternativeName>
        <fullName evidence="1">Ribosome maturation factor RimO</fullName>
    </alternativeName>
</protein>